<feature type="chain" id="PRO_1000099449" description="Isopentenyl-diphosphate Delta-isomerase">
    <location>
        <begin position="1"/>
        <end position="197"/>
    </location>
</feature>
<feature type="domain" description="Nudix hydrolase">
    <location>
        <begin position="46"/>
        <end position="183"/>
    </location>
</feature>
<feature type="active site" evidence="1">
    <location>
        <position position="83"/>
    </location>
</feature>
<feature type="active site" evidence="1">
    <location>
        <position position="132"/>
    </location>
</feature>
<feature type="binding site" evidence="1">
    <location>
        <position position="41"/>
    </location>
    <ligand>
        <name>Mn(2+)</name>
        <dbReference type="ChEBI" id="CHEBI:29035"/>
    </ligand>
</feature>
<feature type="binding site" evidence="1">
    <location>
        <position position="48"/>
    </location>
    <ligand>
        <name>Mn(2+)</name>
        <dbReference type="ChEBI" id="CHEBI:29035"/>
    </ligand>
</feature>
<feature type="binding site" evidence="1">
    <location>
        <position position="85"/>
    </location>
    <ligand>
        <name>Mn(2+)</name>
        <dbReference type="ChEBI" id="CHEBI:29035"/>
    </ligand>
</feature>
<feature type="binding site" evidence="1">
    <location>
        <position position="103"/>
    </location>
    <ligand>
        <name>Mg(2+)</name>
        <dbReference type="ChEBI" id="CHEBI:18420"/>
    </ligand>
</feature>
<feature type="binding site" evidence="1">
    <location>
        <position position="130"/>
    </location>
    <ligand>
        <name>Mn(2+)</name>
        <dbReference type="ChEBI" id="CHEBI:29035"/>
    </ligand>
</feature>
<feature type="binding site" evidence="1">
    <location>
        <position position="132"/>
    </location>
    <ligand>
        <name>Mn(2+)</name>
        <dbReference type="ChEBI" id="CHEBI:29035"/>
    </ligand>
</feature>
<evidence type="ECO:0000255" key="1">
    <source>
        <dbReference type="HAMAP-Rule" id="MF_00202"/>
    </source>
</evidence>
<sequence length="197" mass="21037">MPTTPATATHSSSNGTAEAIMLELVDENGTTIGTAEKLAAHQAPGQLHRAFSVFLFDEQGRLLLQRRALGKYHSPGVWSNTCCGHPYPGEAPFAAAARRTHEELGLSPSLLAEAGTVRYNHPDPASGLVEQEFNHLFVGLAQTAPKPDPEEVGETAFVTAAELAERHAKAPFSAWFMTVLDAARPAIRELTGPSAGW</sequence>
<reference key="1">
    <citation type="journal article" date="2008" name="J. Bacteriol.">
        <title>Genome sequence of the streptomycin-producing microorganism Streptomyces griseus IFO 13350.</title>
        <authorList>
            <person name="Ohnishi Y."/>
            <person name="Ishikawa J."/>
            <person name="Hara H."/>
            <person name="Suzuki H."/>
            <person name="Ikenoya M."/>
            <person name="Ikeda H."/>
            <person name="Yamashita A."/>
            <person name="Hattori M."/>
            <person name="Horinouchi S."/>
        </authorList>
    </citation>
    <scope>NUCLEOTIDE SEQUENCE [LARGE SCALE GENOMIC DNA]</scope>
    <source>
        <strain>JCM 4626 / CBS 651.72 / NBRC 13350 / KCC S-0626 / ISP 5235</strain>
    </source>
</reference>
<accession>B1VTW2</accession>
<dbReference type="EC" id="5.3.3.2" evidence="1"/>
<dbReference type="EMBL" id="AP009493">
    <property type="protein sequence ID" value="BAG17806.1"/>
    <property type="molecule type" value="Genomic_DNA"/>
</dbReference>
<dbReference type="RefSeq" id="WP_003964867.1">
    <property type="nucleotide sequence ID" value="NC_010572.1"/>
</dbReference>
<dbReference type="SMR" id="B1VTW2"/>
<dbReference type="KEGG" id="sgr:SGR_977"/>
<dbReference type="eggNOG" id="COG1443">
    <property type="taxonomic scope" value="Bacteria"/>
</dbReference>
<dbReference type="HOGENOM" id="CLU_060552_2_1_11"/>
<dbReference type="UniPathway" id="UPA00059">
    <property type="reaction ID" value="UER00104"/>
</dbReference>
<dbReference type="Proteomes" id="UP000001685">
    <property type="component" value="Chromosome"/>
</dbReference>
<dbReference type="GO" id="GO:0005737">
    <property type="term" value="C:cytoplasm"/>
    <property type="evidence" value="ECO:0007669"/>
    <property type="project" value="UniProtKB-SubCell"/>
</dbReference>
<dbReference type="GO" id="GO:0004452">
    <property type="term" value="F:isopentenyl-diphosphate delta-isomerase activity"/>
    <property type="evidence" value="ECO:0007669"/>
    <property type="project" value="UniProtKB-UniRule"/>
</dbReference>
<dbReference type="GO" id="GO:0046872">
    <property type="term" value="F:metal ion binding"/>
    <property type="evidence" value="ECO:0007669"/>
    <property type="project" value="UniProtKB-KW"/>
</dbReference>
<dbReference type="GO" id="GO:0050992">
    <property type="term" value="P:dimethylallyl diphosphate biosynthetic process"/>
    <property type="evidence" value="ECO:0007669"/>
    <property type="project" value="UniProtKB-UniRule"/>
</dbReference>
<dbReference type="GO" id="GO:0009240">
    <property type="term" value="P:isopentenyl diphosphate biosynthetic process"/>
    <property type="evidence" value="ECO:0007669"/>
    <property type="project" value="TreeGrafter"/>
</dbReference>
<dbReference type="CDD" id="cd02885">
    <property type="entry name" value="NUDIX_IPP_Isomerase"/>
    <property type="match status" value="1"/>
</dbReference>
<dbReference type="FunFam" id="3.90.79.10:FF:000009">
    <property type="entry name" value="Isopentenyl-diphosphate Delta-isomerase"/>
    <property type="match status" value="1"/>
</dbReference>
<dbReference type="Gene3D" id="3.90.79.10">
    <property type="entry name" value="Nucleoside Triphosphate Pyrophosphohydrolase"/>
    <property type="match status" value="1"/>
</dbReference>
<dbReference type="HAMAP" id="MF_00202">
    <property type="entry name" value="Idi"/>
    <property type="match status" value="1"/>
</dbReference>
<dbReference type="InterPro" id="IPR056375">
    <property type="entry name" value="Idi_bact"/>
</dbReference>
<dbReference type="InterPro" id="IPR011876">
    <property type="entry name" value="IsopentenylPP_isomerase_typ1"/>
</dbReference>
<dbReference type="InterPro" id="IPR015797">
    <property type="entry name" value="NUDIX_hydrolase-like_dom_sf"/>
</dbReference>
<dbReference type="InterPro" id="IPR000086">
    <property type="entry name" value="NUDIX_hydrolase_dom"/>
</dbReference>
<dbReference type="NCBIfam" id="TIGR02150">
    <property type="entry name" value="IPP_isom_1"/>
    <property type="match status" value="1"/>
</dbReference>
<dbReference type="NCBIfam" id="NF002995">
    <property type="entry name" value="PRK03759.1"/>
    <property type="match status" value="1"/>
</dbReference>
<dbReference type="PANTHER" id="PTHR10885">
    <property type="entry name" value="ISOPENTENYL-DIPHOSPHATE DELTA-ISOMERASE"/>
    <property type="match status" value="1"/>
</dbReference>
<dbReference type="PANTHER" id="PTHR10885:SF0">
    <property type="entry name" value="ISOPENTENYL-DIPHOSPHATE DELTA-ISOMERASE"/>
    <property type="match status" value="1"/>
</dbReference>
<dbReference type="Pfam" id="PF00293">
    <property type="entry name" value="NUDIX"/>
    <property type="match status" value="1"/>
</dbReference>
<dbReference type="PIRSF" id="PIRSF018427">
    <property type="entry name" value="Isopntndiph_ism"/>
    <property type="match status" value="1"/>
</dbReference>
<dbReference type="SUPFAM" id="SSF55811">
    <property type="entry name" value="Nudix"/>
    <property type="match status" value="1"/>
</dbReference>
<dbReference type="PROSITE" id="PS51462">
    <property type="entry name" value="NUDIX"/>
    <property type="match status" value="1"/>
</dbReference>
<protein>
    <recommendedName>
        <fullName evidence="1">Isopentenyl-diphosphate Delta-isomerase</fullName>
        <shortName evidence="1">IPP isomerase</shortName>
        <ecNumber evidence="1">5.3.3.2</ecNumber>
    </recommendedName>
    <alternativeName>
        <fullName evidence="1">IPP:DMAPP isomerase</fullName>
    </alternativeName>
    <alternativeName>
        <fullName evidence="1">Isopentenyl pyrophosphate isomerase</fullName>
    </alternativeName>
</protein>
<keyword id="KW-0963">Cytoplasm</keyword>
<keyword id="KW-0413">Isomerase</keyword>
<keyword id="KW-0414">Isoprene biosynthesis</keyword>
<keyword id="KW-0460">Magnesium</keyword>
<keyword id="KW-0464">Manganese</keyword>
<keyword id="KW-0479">Metal-binding</keyword>
<organism>
    <name type="scientific">Streptomyces griseus subsp. griseus (strain JCM 4626 / CBS 651.72 / NBRC 13350 / KCC S-0626 / ISP 5235)</name>
    <dbReference type="NCBI Taxonomy" id="455632"/>
    <lineage>
        <taxon>Bacteria</taxon>
        <taxon>Bacillati</taxon>
        <taxon>Actinomycetota</taxon>
        <taxon>Actinomycetes</taxon>
        <taxon>Kitasatosporales</taxon>
        <taxon>Streptomycetaceae</taxon>
        <taxon>Streptomyces</taxon>
    </lineage>
</organism>
<gene>
    <name evidence="1" type="primary">idi</name>
    <name type="ordered locus">SGR_977</name>
</gene>
<proteinExistence type="inferred from homology"/>
<name>IDI_STRGG</name>
<comment type="function">
    <text evidence="1">Catalyzes the 1,3-allylic rearrangement of the homoallylic substrate isopentenyl (IPP) to its highly electrophilic allylic isomer, dimethylallyl diphosphate (DMAPP).</text>
</comment>
<comment type="catalytic activity">
    <reaction evidence="1">
        <text>isopentenyl diphosphate = dimethylallyl diphosphate</text>
        <dbReference type="Rhea" id="RHEA:23284"/>
        <dbReference type="ChEBI" id="CHEBI:57623"/>
        <dbReference type="ChEBI" id="CHEBI:128769"/>
        <dbReference type="EC" id="5.3.3.2"/>
    </reaction>
</comment>
<comment type="cofactor">
    <cofactor evidence="1">
        <name>Mg(2+)</name>
        <dbReference type="ChEBI" id="CHEBI:18420"/>
    </cofactor>
    <text evidence="1">Binds 1 Mg(2+) ion per subunit. The magnesium ion binds only when substrate is bound.</text>
</comment>
<comment type="cofactor">
    <cofactor evidence="1">
        <name>Mn(2+)</name>
        <dbReference type="ChEBI" id="CHEBI:29035"/>
    </cofactor>
    <text evidence="1">Binds 1 Mn(2+) ion per subunit.</text>
</comment>
<comment type="pathway">
    <text evidence="1">Isoprenoid biosynthesis; dimethylallyl diphosphate biosynthesis; dimethylallyl diphosphate from isopentenyl diphosphate: step 1/1.</text>
</comment>
<comment type="subcellular location">
    <subcellularLocation>
        <location evidence="1">Cytoplasm</location>
    </subcellularLocation>
</comment>
<comment type="similarity">
    <text evidence="1">Belongs to the IPP isomerase type 1 family.</text>
</comment>